<accession>P0CF22</accession>
<accession>P17324</accession>
<accession>P40443</accession>
<accession>P40444</accession>
<accession>Q6Q579</accession>
<sequence length="210" mass="22812">MAQESQHGSKTLYVHPFDNETIWEGHSTIVDEIIEQLKENDISLPRVKALVCSVGGGGLFSGIIKGLDRNQLAEKIPVVAVETAGCDVLNKSLKKGSPVTLEKLTSVATSLASPYIASFAFESFNKYGCKSVVLSDQDVLATCLRYADDYNFIVEPACGASLHLCYHPEILEDILEQKIYEDDIVIIIACGGSCMTYEDLVKASSTLNVS</sequence>
<gene>
    <name type="primary">SDL1</name>
    <name type="synonym">SDH1</name>
    <name type="ordered locus">YIL167W</name>
    <name type="ORF">YI9402.08B</name>
</gene>
<dbReference type="EC" id="4.3.1.17"/>
<dbReference type="EMBL" id="Z46921">
    <property type="protein sequence ID" value="CAA87025.1"/>
    <property type="molecule type" value="Genomic_DNA"/>
</dbReference>
<dbReference type="PIR" id="S12731">
    <property type="entry name" value="S12731"/>
</dbReference>
<dbReference type="SMR" id="P0CF22"/>
<dbReference type="AGR" id="SGD:S000001429"/>
<dbReference type="SGD" id="S000001429">
    <property type="gene designation" value="SDL1"/>
</dbReference>
<dbReference type="UniPathway" id="UPA00138"/>
<dbReference type="GO" id="GO:0005737">
    <property type="term" value="C:cytoplasm"/>
    <property type="evidence" value="ECO:0007669"/>
    <property type="project" value="UniProtKB-SubCell"/>
</dbReference>
<dbReference type="GO" id="GO:0003941">
    <property type="term" value="F:L-serine ammonia-lyase activity"/>
    <property type="evidence" value="ECO:0007669"/>
    <property type="project" value="UniProtKB-EC"/>
</dbReference>
<dbReference type="GO" id="GO:0006094">
    <property type="term" value="P:gluconeogenesis"/>
    <property type="evidence" value="ECO:0007669"/>
    <property type="project" value="UniProtKB-UniPathway"/>
</dbReference>
<dbReference type="FunFam" id="3.40.50.1100:FF:000068">
    <property type="entry name" value="Catabolic L-serine/threonine dehydratase"/>
    <property type="match status" value="1"/>
</dbReference>
<dbReference type="Gene3D" id="3.40.50.1100">
    <property type="match status" value="1"/>
</dbReference>
<dbReference type="InterPro" id="IPR050147">
    <property type="entry name" value="Ser/Thr_Dehydratase"/>
</dbReference>
<dbReference type="InterPro" id="IPR001926">
    <property type="entry name" value="TrpB-like_PALP"/>
</dbReference>
<dbReference type="InterPro" id="IPR036052">
    <property type="entry name" value="TrpB-like_PALP_sf"/>
</dbReference>
<dbReference type="PANTHER" id="PTHR48078:SF2">
    <property type="entry name" value="CATABOLIC L-SERINE_THREONINE DEHYDRATASE"/>
    <property type="match status" value="1"/>
</dbReference>
<dbReference type="PANTHER" id="PTHR48078">
    <property type="entry name" value="THREONINE DEHYDRATASE, MITOCHONDRIAL-RELATED"/>
    <property type="match status" value="1"/>
</dbReference>
<dbReference type="Pfam" id="PF00291">
    <property type="entry name" value="PALP"/>
    <property type="match status" value="1"/>
</dbReference>
<dbReference type="SUPFAM" id="SSF53686">
    <property type="entry name" value="Tryptophan synthase beta subunit-like PLP-dependent enzymes"/>
    <property type="match status" value="1"/>
</dbReference>
<name>YI167_YEAST</name>
<reference key="1">
    <citation type="journal article" date="1997" name="Nature">
        <title>The nucleotide sequence of Saccharomyces cerevisiae chromosome IX.</title>
        <authorList>
            <person name="Churcher C.M."/>
            <person name="Bowman S."/>
            <person name="Badcock K."/>
            <person name="Bankier A.T."/>
            <person name="Brown D."/>
            <person name="Chillingworth T."/>
            <person name="Connor R."/>
            <person name="Devlin K."/>
            <person name="Gentles S."/>
            <person name="Hamlin N."/>
            <person name="Harris D.E."/>
            <person name="Horsnell T."/>
            <person name="Hunt S."/>
            <person name="Jagels K."/>
            <person name="Jones M."/>
            <person name="Lye G."/>
            <person name="Moule S."/>
            <person name="Odell C."/>
            <person name="Pearson D."/>
            <person name="Rajandream M.A."/>
            <person name="Rice P."/>
            <person name="Rowley N."/>
            <person name="Skelton J."/>
            <person name="Smith V."/>
            <person name="Walsh S.V."/>
            <person name="Whitehead S."/>
            <person name="Barrell B.G."/>
        </authorList>
    </citation>
    <scope>NUCLEOTIDE SEQUENCE [LARGE SCALE GENOMIC DNA]</scope>
    <source>
        <strain>ATCC 204508 / S288c</strain>
    </source>
</reference>
<reference key="2">
    <citation type="journal article" date="2014" name="G3 (Bethesda)">
        <title>The reference genome sequence of Saccharomyces cerevisiae: Then and now.</title>
        <authorList>
            <person name="Engel S.R."/>
            <person name="Dietrich F.S."/>
            <person name="Fisk D.G."/>
            <person name="Binkley G."/>
            <person name="Balakrishnan R."/>
            <person name="Costanzo M.C."/>
            <person name="Dwight S.S."/>
            <person name="Hitz B.C."/>
            <person name="Karra K."/>
            <person name="Nash R.S."/>
            <person name="Weng S."/>
            <person name="Wong E.D."/>
            <person name="Lloyd P."/>
            <person name="Skrzypek M.S."/>
            <person name="Miyasato S.R."/>
            <person name="Simison M."/>
            <person name="Cherry J.M."/>
        </authorList>
    </citation>
    <scope>GENOME REANNOTATION</scope>
    <source>
        <strain>ATCC 204508 / S288c</strain>
    </source>
</reference>
<organism>
    <name type="scientific">Saccharomyces cerevisiae (strain ATCC 204508 / S288c)</name>
    <name type="common">Baker's yeast</name>
    <dbReference type="NCBI Taxonomy" id="559292"/>
    <lineage>
        <taxon>Eukaryota</taxon>
        <taxon>Fungi</taxon>
        <taxon>Dikarya</taxon>
        <taxon>Ascomycota</taxon>
        <taxon>Saccharomycotina</taxon>
        <taxon>Saccharomycetes</taxon>
        <taxon>Saccharomycetales</taxon>
        <taxon>Saccharomycetaceae</taxon>
        <taxon>Saccharomyces</taxon>
    </lineage>
</organism>
<proteinExistence type="uncertain"/>
<keyword id="KW-0963">Cytoplasm</keyword>
<keyword id="KW-0312">Gluconeogenesis</keyword>
<keyword id="KW-0456">Lyase</keyword>
<keyword id="KW-0663">Pyridoxal phosphate</keyword>
<protein>
    <recommendedName>
        <fullName>Putative truncated L-serine dehydratase SDL1</fullName>
        <ecNumber>4.3.1.17</ecNumber>
    </recommendedName>
    <alternativeName>
        <fullName>L-serine deaminase homolog 1</fullName>
    </alternativeName>
</protein>
<comment type="catalytic activity">
    <reaction>
        <text>L-serine = pyruvate + NH4(+)</text>
        <dbReference type="Rhea" id="RHEA:19169"/>
        <dbReference type="ChEBI" id="CHEBI:15361"/>
        <dbReference type="ChEBI" id="CHEBI:28938"/>
        <dbReference type="ChEBI" id="CHEBI:33384"/>
        <dbReference type="EC" id="4.3.1.17"/>
    </reaction>
</comment>
<comment type="cofactor">
    <cofactor evidence="1">
        <name>pyridoxal 5'-phosphate</name>
        <dbReference type="ChEBI" id="CHEBI:597326"/>
    </cofactor>
</comment>
<comment type="pathway">
    <text>Carbohydrate biosynthesis; gluconeogenesis.</text>
</comment>
<comment type="subcellular location">
    <subcellularLocation>
        <location evidence="1">Cytoplasm</location>
    </subcellularLocation>
</comment>
<comment type="similarity">
    <text evidence="2">Belongs to the serine/threonine dehydratase family.</text>
</comment>
<comment type="caution">
    <text evidence="3">Could be the product of a pseudogene unlikely to encode a functional protein. This is the C-terminal part of L-serine dehydratase. Strain S288c has a stop codon in position 128, which disrupts the gene coding for this protein and produces two ORFs YIL167W and YIL168W. Because of that it is not part of the S.cerevisiae S288c complete/reference proteome set. A contiguous sequence for L-serine dehydratase can be found in other strain backgrounds (AC P0CF23).</text>
</comment>
<evidence type="ECO:0000250" key="1"/>
<evidence type="ECO:0000305" key="2"/>
<evidence type="ECO:0000305" key="3">
    <source>
    </source>
</evidence>
<feature type="chain" id="PRO_0000393394" description="Putative truncated L-serine dehydratase SDL1">
    <location>
        <begin position="1"/>
        <end position="210"/>
    </location>
</feature>